<sequence length="489" mass="54244">MEMETSVLGLSSTLIIALAITVIFLLKAKSSSAIKWPPGPKTLPIIGNLHQLGGDELHIVLAKLARVHGAIMTIWMAKKPVIVVSDVNSVWEVLVSKSSDYAARDAAEISKIVSASSHSINTSDSGPYWQTLRRGLTHGPLGPLNISAQIPIQQRDMQRVIREMQQDAAANGGVIKPLDHLKRSSTRLVSRLIFGDTFDNDPYNDSMHEVVQDLNRFGGIALLEQAFSFAKYLPSYKRGVKEFHIHKRKIDDLVRPVVASSNPPSNSYLGFLQSQNYSEEIIIACIFELYLLAMDSSASTATWALAFMIRDQQVQEKLYQDIKRVIGDEVGLVKAEDLSKMHYLQAVVKETMRMKPIAPLAIPHKTAIDTSLMGTKVPKGTCVMVNLYALHHDESVWAKPYTFMPERFLQREDGKSVTEQAFLPFGAGMRICGGMEVGKLQFSLALANLVNAFKWTSAAEGKLPDMSDELQFITVMKTPLEARIVPRNP</sequence>
<reference key="1">
    <citation type="journal article" date="2013" name="J. Biol. Chem.">
        <title>Next generation sequencing in predicting gene function in podophyllotoxin biosynthesis.</title>
        <authorList>
            <person name="Marques J.V."/>
            <person name="Kim K.-W."/>
            <person name="Lee C."/>
            <person name="Costa M.A."/>
            <person name="May G.D."/>
            <person name="Crow J.A."/>
            <person name="Davin L.B."/>
            <person name="Lewis N.G."/>
        </authorList>
    </citation>
    <scope>NUCLEOTIDE SEQUENCE [MRNA]</scope>
    <scope>FUNCTION</scope>
    <scope>CATALYTIC ACTIVITY</scope>
    <scope>BIOTECHNOLOGY</scope>
    <scope>PATHWAY</scope>
    <scope>BIOPHYSICOCHEMICAL PROPERTIES</scope>
</reference>
<reference key="2">
    <citation type="journal article" date="2016" name="Mol. Ecol. Resour.">
        <title>Comparative transcriptome resources of two Dysosma species (Berberidaceae) and molecular evolution of the CYP719A gene in Podophylloideae.</title>
        <authorList>
            <person name="Mao Y."/>
            <person name="Zhang Y."/>
            <person name="Xu C."/>
            <person name="Qiu Y."/>
        </authorList>
    </citation>
    <scope>NUCLEOTIDE SEQUENCE [GENOMIC DNA] OF 171-433</scope>
    <source>
        <strain>cv. LPP1-3</strain>
        <strain>cv. LPP2-1</strain>
    </source>
</reference>
<proteinExistence type="evidence at protein level"/>
<dbReference type="EC" id="1.14.19.72" evidence="3"/>
<dbReference type="EMBL" id="KC110998">
    <property type="protein sequence ID" value="AGC29954.1"/>
    <property type="molecule type" value="mRNA"/>
</dbReference>
<dbReference type="EMBL" id="KP185299">
    <property type="protein sequence ID" value="AKH66499.1"/>
    <property type="molecule type" value="Genomic_DNA"/>
</dbReference>
<dbReference type="EMBL" id="KP185300">
    <property type="protein sequence ID" value="AKH66500.1"/>
    <property type="molecule type" value="Genomic_DNA"/>
</dbReference>
<dbReference type="SMR" id="L7T720"/>
<dbReference type="KEGG" id="ag:AGC29954"/>
<dbReference type="BioCyc" id="MetaCyc:MONOMER-19146"/>
<dbReference type="BRENDA" id="1.14.19.72">
    <property type="organism ID" value="4929"/>
</dbReference>
<dbReference type="UniPathway" id="UPA00711"/>
<dbReference type="GO" id="GO:0016020">
    <property type="term" value="C:membrane"/>
    <property type="evidence" value="ECO:0007669"/>
    <property type="project" value="UniProtKB-SubCell"/>
</dbReference>
<dbReference type="GO" id="GO:0020037">
    <property type="term" value="F:heme binding"/>
    <property type="evidence" value="ECO:0007669"/>
    <property type="project" value="InterPro"/>
</dbReference>
<dbReference type="GO" id="GO:0005506">
    <property type="term" value="F:iron ion binding"/>
    <property type="evidence" value="ECO:0007669"/>
    <property type="project" value="InterPro"/>
</dbReference>
<dbReference type="GO" id="GO:0004497">
    <property type="term" value="F:monooxygenase activity"/>
    <property type="evidence" value="ECO:0007669"/>
    <property type="project" value="InterPro"/>
</dbReference>
<dbReference type="GO" id="GO:0016705">
    <property type="term" value="F:oxidoreductase activity, acting on paired donors, with incorporation or reduction of molecular oxygen"/>
    <property type="evidence" value="ECO:0007669"/>
    <property type="project" value="InterPro"/>
</dbReference>
<dbReference type="GO" id="GO:0009699">
    <property type="term" value="P:phenylpropanoid biosynthetic process"/>
    <property type="evidence" value="ECO:0007669"/>
    <property type="project" value="UniProtKB-UniPathway"/>
</dbReference>
<dbReference type="Gene3D" id="1.10.630.10">
    <property type="entry name" value="Cytochrome P450"/>
    <property type="match status" value="1"/>
</dbReference>
<dbReference type="InterPro" id="IPR001128">
    <property type="entry name" value="Cyt_P450"/>
</dbReference>
<dbReference type="InterPro" id="IPR002401">
    <property type="entry name" value="Cyt_P450_E_grp-I"/>
</dbReference>
<dbReference type="InterPro" id="IPR036396">
    <property type="entry name" value="Cyt_P450_sf"/>
</dbReference>
<dbReference type="PANTHER" id="PTHR47944">
    <property type="entry name" value="CYTOCHROME P450 98A9"/>
    <property type="match status" value="1"/>
</dbReference>
<dbReference type="PANTHER" id="PTHR47944:SF4">
    <property type="entry name" value="OS09G0441700 PROTEIN"/>
    <property type="match status" value="1"/>
</dbReference>
<dbReference type="Pfam" id="PF00067">
    <property type="entry name" value="p450"/>
    <property type="match status" value="1"/>
</dbReference>
<dbReference type="PRINTS" id="PR00463">
    <property type="entry name" value="EP450I"/>
</dbReference>
<dbReference type="PRINTS" id="PR00385">
    <property type="entry name" value="P450"/>
</dbReference>
<dbReference type="SUPFAM" id="SSF48264">
    <property type="entry name" value="Cytochrome P450"/>
    <property type="match status" value="1"/>
</dbReference>
<gene>
    <name evidence="4" type="primary">CYP719A24</name>
</gene>
<name>C719A_PODPE</name>
<keyword id="KW-0349">Heme</keyword>
<keyword id="KW-0408">Iron</keyword>
<keyword id="KW-0472">Membrane</keyword>
<keyword id="KW-0479">Metal-binding</keyword>
<keyword id="KW-0560">Oxidoreductase</keyword>
<keyword id="KW-0812">Transmembrane</keyword>
<keyword id="KW-1133">Transmembrane helix</keyword>
<evidence type="ECO:0000250" key="1">
    <source>
        <dbReference type="UniProtKB" id="Q96242"/>
    </source>
</evidence>
<evidence type="ECO:0000255" key="2"/>
<evidence type="ECO:0000269" key="3">
    <source>
    </source>
</evidence>
<evidence type="ECO:0000303" key="4">
    <source>
    </source>
</evidence>
<evidence type="ECO:0000305" key="5"/>
<accession>L7T720</accession>
<accession>A0A0F7LUS1</accession>
<organism>
    <name type="scientific">Podophyllum peltatum</name>
    <name type="common">American mandrake</name>
    <dbReference type="NCBI Taxonomy" id="35933"/>
    <lineage>
        <taxon>Eukaryota</taxon>
        <taxon>Viridiplantae</taxon>
        <taxon>Streptophyta</taxon>
        <taxon>Embryophyta</taxon>
        <taxon>Tracheophyta</taxon>
        <taxon>Spermatophyta</taxon>
        <taxon>Magnoliopsida</taxon>
        <taxon>Ranunculales</taxon>
        <taxon>Berberidaceae</taxon>
        <taxon>Podophylloideae</taxon>
        <taxon>Podophylleae</taxon>
        <taxon>Podophyllum</taxon>
    </lineage>
</organism>
<comment type="function">
    <text evidence="3">Cytochrome P450 involved in the biosynthesis of etoposide, a chemotherapeutic compound of the topoisomerase inhibitor family (PubMed:23161544). Catalyzes the conversion of matairesinol to pluviatolide (PubMed:23161544).</text>
</comment>
<comment type="catalytic activity">
    <reaction evidence="3">
        <text>(-)-matairesinol + reduced [NADPH--hemoprotein reductase] + O2 = (-)-pluviatolide + oxidized [NADPH--hemoprotein reductase] + 2 H2O + H(+)</text>
        <dbReference type="Rhea" id="RHEA:49084"/>
        <dbReference type="Rhea" id="RHEA-COMP:11964"/>
        <dbReference type="Rhea" id="RHEA-COMP:11965"/>
        <dbReference type="ChEBI" id="CHEBI:6698"/>
        <dbReference type="ChEBI" id="CHEBI:15377"/>
        <dbReference type="ChEBI" id="CHEBI:15378"/>
        <dbReference type="ChEBI" id="CHEBI:15379"/>
        <dbReference type="ChEBI" id="CHEBI:57618"/>
        <dbReference type="ChEBI" id="CHEBI:58210"/>
        <dbReference type="ChEBI" id="CHEBI:90896"/>
        <dbReference type="EC" id="1.14.19.72"/>
    </reaction>
    <physiologicalReaction direction="left-to-right" evidence="3">
        <dbReference type="Rhea" id="RHEA:49085"/>
    </physiologicalReaction>
</comment>
<comment type="cofactor">
    <cofactor evidence="1">
        <name>heme</name>
        <dbReference type="ChEBI" id="CHEBI:30413"/>
    </cofactor>
</comment>
<comment type="biophysicochemical properties">
    <kinetics>
        <KM evidence="3">5.8 uM for (-)-matairesinol</KM>
        <text evidence="3">kcat is 7.8 min(-1) with (-)-matairesinol as substrate.</text>
    </kinetics>
</comment>
<comment type="pathway">
    <text evidence="3">Aromatic compound metabolism; phenylpropanoid biosynthesis.</text>
</comment>
<comment type="subcellular location">
    <subcellularLocation>
        <location evidence="2">Membrane</location>
        <topology evidence="2">Single-pass membrane protein</topology>
    </subcellularLocation>
</comment>
<comment type="similarity">
    <text evidence="5">Belongs to the cytochrome P450 family.</text>
</comment>
<feature type="chain" id="PRO_0000451902" description="Pluviatolide synthase">
    <location>
        <begin position="1"/>
        <end position="489"/>
    </location>
</feature>
<feature type="transmembrane region" description="Helical" evidence="2">
    <location>
        <begin position="6"/>
        <end position="26"/>
    </location>
</feature>
<feature type="binding site" description="axial binding residue" evidence="1">
    <location>
        <position position="432"/>
    </location>
    <ligand>
        <name>heme</name>
        <dbReference type="ChEBI" id="CHEBI:30413"/>
    </ligand>
    <ligandPart>
        <name>Fe</name>
        <dbReference type="ChEBI" id="CHEBI:18248"/>
    </ligandPart>
</feature>
<feature type="sequence conflict" description="In Ref. 2; AKH66499/AKH66500." evidence="5" ref="2">
    <original>E</original>
    <variation>G</variation>
    <location>
        <position position="329"/>
    </location>
</feature>
<protein>
    <recommendedName>
        <fullName evidence="4">Pluviatolide synthase</fullName>
        <ecNumber evidence="3">1.14.19.72</ecNumber>
    </recommendedName>
    <alternativeName>
        <fullName evidence="4">Cytochrome P450 family 719 subfamily A polypeptide 23</fullName>
    </alternativeName>
</protein>